<accession>Q9Y4C1</accession>
<accession>D6W5M3</accession>
<accession>Q53S72</accession>
<accession>Q68D47</accession>
<accession>Q68UT9</accession>
<accession>Q6N050</accession>
<accession>Q8IY08</accession>
<comment type="function">
    <text evidence="5 8">Histone demethylase that specifically demethylates 'Lys-9' of histone H3, thereby playing a central role in histone code. Preferentially demethylates mono- and dimethylated H3 'Lys-9' residue, with a preference for dimethylated residue, while it has weak or no activity on trimethylated H3 'Lys-9'. Demethylation of Lys residue generates formaldehyde and succinate. Involved in hormone-dependent transcriptional activation, by participating in recruitment to androgen-receptor target genes, resulting in H3 'Lys-9' demethylation and transcriptional activation. Involved in spermatogenesis by regulating expression of target genes such as PRM1 and TNP1 which are required for packaging and condensation of sperm chromatin. Involved in obesity resistance through regulation of metabolic genes such as PPARA and UCP1.</text>
</comment>
<comment type="catalytic activity">
    <reaction evidence="5">
        <text>N(6),N(6)-dimethyl-L-lysyl(9)-[histone H3] + 2 2-oxoglutarate + 2 O2 = L-lysyl(9)-[histone H3] + 2 formaldehyde + 2 succinate + 2 CO2</text>
        <dbReference type="Rhea" id="RHEA:60188"/>
        <dbReference type="Rhea" id="RHEA-COMP:15541"/>
        <dbReference type="Rhea" id="RHEA-COMP:15546"/>
        <dbReference type="ChEBI" id="CHEBI:15379"/>
        <dbReference type="ChEBI" id="CHEBI:16526"/>
        <dbReference type="ChEBI" id="CHEBI:16810"/>
        <dbReference type="ChEBI" id="CHEBI:16842"/>
        <dbReference type="ChEBI" id="CHEBI:29969"/>
        <dbReference type="ChEBI" id="CHEBI:30031"/>
        <dbReference type="ChEBI" id="CHEBI:61976"/>
        <dbReference type="EC" id="1.14.11.65"/>
    </reaction>
</comment>
<comment type="cofactor">
    <cofactor evidence="5">
        <name>Fe(2+)</name>
        <dbReference type="ChEBI" id="CHEBI:29033"/>
    </cofactor>
    <text evidence="5">Binds 1 Fe(2+) ion per subunit.</text>
</comment>
<comment type="subunit">
    <text evidence="9">Interacts with VRK1.</text>
</comment>
<comment type="interaction">
    <interactant intactId="EBI-2515339">
        <id>Q9Y4C1</id>
    </interactant>
    <interactant intactId="EBI-73869">
        <id>O75582</id>
        <label>RPS6KA5</label>
    </interactant>
    <organismsDiffer>false</organismsDiffer>
    <experiments>3</experiments>
</comment>
<comment type="interaction">
    <interactant intactId="EBI-2515339">
        <id>Q9Y4C1</id>
    </interactant>
    <interactant intactId="EBI-16135973">
        <id>O75582-1</id>
        <label>RPS6KA5</label>
    </interactant>
    <organismsDiffer>false</organismsDiffer>
    <experiments>3</experiments>
</comment>
<comment type="interaction">
    <interactant intactId="EBI-2515339">
        <id>Q9Y4C1</id>
    </interactant>
    <interactant intactId="EBI-15711971">
        <id>P42224-1</id>
        <label>STAT1</label>
    </interactant>
    <organismsDiffer>false</organismsDiffer>
    <experiments>8</experiments>
</comment>
<comment type="subcellular location">
    <subcellularLocation>
        <location evidence="1">Cytoplasm</location>
    </subcellularLocation>
    <subcellularLocation>
        <location evidence="1">Nucleus</location>
    </subcellularLocation>
    <text evidence="1">Nuclear in round spermatids. When spermatids start to elongate, localizes to the cytoplasm where it forms distinct foci which disappear in mature spermatozoa (By similarity).</text>
</comment>
<comment type="domain">
    <text evidence="5">The JmjC domain and the C6-type zinc-finger are required for the demethylation activity.</text>
</comment>
<comment type="domain">
    <text evidence="1">Leu-Xaa-Xaa-Leu-Leu (LXXLL) motifs are known to mediate the association with nuclear receptors.</text>
</comment>
<comment type="similarity">
    <text evidence="12">Belongs to the JHDM2 histone demethylase family.</text>
</comment>
<comment type="sequence caution" evidence="12">
    <conflict type="erroneous initiation">
        <sequence resource="EMBL-CDS" id="BAA34462"/>
    </conflict>
    <text>Extended N-terminus.</text>
</comment>
<proteinExistence type="evidence at protein level"/>
<evidence type="ECO:0000250" key="1"/>
<evidence type="ECO:0000255" key="2"/>
<evidence type="ECO:0000255" key="3">
    <source>
        <dbReference type="PROSITE-ProRule" id="PRU00538"/>
    </source>
</evidence>
<evidence type="ECO:0000256" key="4">
    <source>
        <dbReference type="SAM" id="MobiDB-lite"/>
    </source>
</evidence>
<evidence type="ECO:0000269" key="5">
    <source>
    </source>
</evidence>
<evidence type="ECO:0000269" key="6">
    <source>
    </source>
</evidence>
<evidence type="ECO:0000269" key="7">
    <source>
    </source>
</evidence>
<evidence type="ECO:0000269" key="8">
    <source>
    </source>
</evidence>
<evidence type="ECO:0000269" key="9">
    <source>
    </source>
</evidence>
<evidence type="ECO:0000269" key="10">
    <source>
    </source>
</evidence>
<evidence type="ECO:0000269" key="11">
    <source ref="4"/>
</evidence>
<evidence type="ECO:0000305" key="12"/>
<evidence type="ECO:0000305" key="13">
    <source>
    </source>
</evidence>
<evidence type="ECO:0000305" key="14">
    <source>
    </source>
</evidence>
<evidence type="ECO:0007744" key="15">
    <source>
    </source>
</evidence>
<evidence type="ECO:0007744" key="16">
    <source>
    </source>
</evidence>
<evidence type="ECO:0007744" key="17">
    <source>
    </source>
</evidence>
<evidence type="ECO:0007744" key="18">
    <source>
    </source>
</evidence>
<feature type="chain" id="PRO_0000084285" description="Lysine-specific demethylase 3A">
    <location>
        <begin position="1"/>
        <end position="1321"/>
    </location>
</feature>
<feature type="domain" description="JmjC" evidence="3">
    <location>
        <begin position="1058"/>
        <end position="1281"/>
    </location>
</feature>
<feature type="zinc finger region" description="C6-type" evidence="2">
    <location>
        <begin position="662"/>
        <end position="687"/>
    </location>
</feature>
<feature type="region of interest" description="Disordered" evidence="4">
    <location>
        <begin position="307"/>
        <end position="336"/>
    </location>
</feature>
<feature type="region of interest" description="Disordered" evidence="4">
    <location>
        <begin position="383"/>
        <end position="402"/>
    </location>
</feature>
<feature type="region of interest" description="Disordered" evidence="4">
    <location>
        <begin position="438"/>
        <end position="472"/>
    </location>
</feature>
<feature type="short sequence motif" description="LXXLL motif">
    <location>
        <begin position="885"/>
        <end position="889"/>
    </location>
</feature>
<feature type="compositionally biased region" description="Polar residues" evidence="4">
    <location>
        <begin position="316"/>
        <end position="327"/>
    </location>
</feature>
<feature type="binding site" evidence="13 14">
    <location>
        <position position="1120"/>
    </location>
    <ligand>
        <name>Fe cation</name>
        <dbReference type="ChEBI" id="CHEBI:24875"/>
        <note>catalytic</note>
    </ligand>
</feature>
<feature type="binding site" evidence="3">
    <location>
        <position position="1122"/>
    </location>
    <ligand>
        <name>Fe cation</name>
        <dbReference type="ChEBI" id="CHEBI:24875"/>
        <note>catalytic</note>
    </ligand>
</feature>
<feature type="binding site" evidence="3">
    <location>
        <position position="1249"/>
    </location>
    <ligand>
        <name>Fe cation</name>
        <dbReference type="ChEBI" id="CHEBI:24875"/>
        <note>catalytic</note>
    </ligand>
</feature>
<feature type="modified residue" description="Phosphoserine" evidence="17">
    <location>
        <position position="264"/>
    </location>
</feature>
<feature type="modified residue" description="Phosphoserine" evidence="18">
    <location>
        <position position="325"/>
    </location>
</feature>
<feature type="modified residue" description="Phosphoserine" evidence="16 18">
    <location>
        <position position="445"/>
    </location>
</feature>
<feature type="modified residue" description="Phosphoserine" evidence="18">
    <location>
        <position position="766"/>
    </location>
</feature>
<feature type="modified residue" description="N6-acetyllysine" evidence="15">
    <location>
        <position position="895"/>
    </location>
</feature>
<feature type="sequence variant" id="VAR_035940" description="In a breast cancer sample; somatic mutation." evidence="6">
    <original>D</original>
    <variation>H</variation>
    <location>
        <position position="187"/>
    </location>
</feature>
<feature type="sequence variant" id="VAR_030623" description="In dbSNP:rs13424350.">
    <original>E</original>
    <variation>K</variation>
    <location>
        <position position="194"/>
    </location>
</feature>
<feature type="sequence variant" id="VAR_026220" description="In dbSNP:rs2030259." evidence="7 10 11">
    <original>I</original>
    <variation>V</variation>
    <location>
        <position position="212"/>
    </location>
</feature>
<feature type="sequence variant" id="VAR_055977" description="In dbSNP:rs34605051." evidence="7">
    <original>S</original>
    <variation>P</variation>
    <location>
        <position position="447"/>
    </location>
</feature>
<feature type="sequence variant" id="VAR_030624" description="In dbSNP:rs11677451.">
    <original>V</original>
    <variation>E</variation>
    <location>
        <position position="710"/>
    </location>
</feature>
<feature type="mutagenesis site" description="Abolishes lysine-specific histone demethylase activity." evidence="8">
    <original>H</original>
    <variation>A</variation>
    <location>
        <position position="1120"/>
    </location>
</feature>
<feature type="mutagenesis site" description="Abolishes histone demethylase activity." evidence="5">
    <original>H</original>
    <variation>Y</variation>
    <location>
        <position position="1120"/>
    </location>
</feature>
<feature type="sequence conflict" description="In Ref. 2; CAH18459/CAH18373." evidence="12" ref="2">
    <original>D</original>
    <variation>G</variation>
    <location>
        <position position="24"/>
    </location>
</feature>
<feature type="sequence conflict" description="In Ref. 2; CAE45820." evidence="12" ref="2">
    <original>V</original>
    <variation>A</variation>
    <location>
        <position position="51"/>
    </location>
</feature>
<feature type="sequence conflict" description="In Ref. 2; CAH18373." evidence="12" ref="2">
    <original>S</original>
    <variation>G</variation>
    <location>
        <position position="500"/>
    </location>
</feature>
<feature type="sequence conflict" description="In Ref. 2; CAH18459." evidence="12" ref="2">
    <original>G</original>
    <variation>GG</variation>
    <location>
        <position position="698"/>
    </location>
</feature>
<feature type="sequence conflict" description="In Ref. 2; CAH18459." evidence="12" ref="2">
    <original>K</original>
    <variation>KG</variation>
    <location>
        <position position="729"/>
    </location>
</feature>
<feature type="sequence conflict" description="In Ref. 2; CAH18459." evidence="12" ref="2">
    <original>K</original>
    <variation>R</variation>
    <location>
        <position position="767"/>
    </location>
</feature>
<feature type="sequence conflict" description="In Ref. 2; CAH18459." evidence="12" ref="2">
    <original>T</original>
    <variation>TQT</variation>
    <location>
        <position position="773"/>
    </location>
</feature>
<feature type="sequence conflict" description="In Ref. 2; CAE45820." evidence="12" ref="2">
    <original>G</original>
    <variation>R</variation>
    <location>
        <position position="980"/>
    </location>
</feature>
<protein>
    <recommendedName>
        <fullName>Lysine-specific demethylase 3A</fullName>
        <ecNumber evidence="5">1.14.11.65</ecNumber>
    </recommendedName>
    <alternativeName>
        <fullName>JmjC domain-containing histone demethylation protein 2A</fullName>
    </alternativeName>
    <alternativeName>
        <fullName>Jumonji domain-containing protein 1A</fullName>
    </alternativeName>
    <alternativeName>
        <fullName evidence="12">[histone H3]-dimethyl-L-lysine(9) demethylase 3A</fullName>
    </alternativeName>
</protein>
<gene>
    <name type="primary">KDM3A</name>
    <name type="synonym">JHDM2A</name>
    <name type="synonym">JMJD1</name>
    <name type="synonym">JMJD1A</name>
    <name type="synonym">KIAA0742</name>
    <name type="synonym">TSGA</name>
</gene>
<name>KDM3A_HUMAN</name>
<reference key="1">
    <citation type="journal article" date="1998" name="DNA Res.">
        <title>Prediction of the coding sequences of unidentified human genes. XI. The complete sequences of 100 new cDNA clones from brain which code for large proteins in vitro.</title>
        <authorList>
            <person name="Nagase T."/>
            <person name="Ishikawa K."/>
            <person name="Suyama M."/>
            <person name="Kikuno R."/>
            <person name="Miyajima N."/>
            <person name="Tanaka A."/>
            <person name="Kotani H."/>
            <person name="Nomura N."/>
            <person name="Ohara O."/>
        </authorList>
    </citation>
    <scope>NUCLEOTIDE SEQUENCE [LARGE SCALE MRNA]</scope>
    <scope>VARIANT VAL-212</scope>
    <source>
        <tissue>Brain</tissue>
    </source>
</reference>
<reference key="2">
    <citation type="journal article" date="2007" name="BMC Genomics">
        <title>The full-ORF clone resource of the German cDNA consortium.</title>
        <authorList>
            <person name="Bechtel S."/>
            <person name="Rosenfelder H."/>
            <person name="Duda A."/>
            <person name="Schmidt C.P."/>
            <person name="Ernst U."/>
            <person name="Wellenreuther R."/>
            <person name="Mehrle A."/>
            <person name="Schuster C."/>
            <person name="Bahr A."/>
            <person name="Bloecker H."/>
            <person name="Heubner D."/>
            <person name="Hoerlein A."/>
            <person name="Michel G."/>
            <person name="Wedler H."/>
            <person name="Koehrer K."/>
            <person name="Ottenwaelder B."/>
            <person name="Poustka A."/>
            <person name="Wiemann S."/>
            <person name="Schupp I."/>
        </authorList>
    </citation>
    <scope>NUCLEOTIDE SEQUENCE [LARGE SCALE MRNA]</scope>
    <scope>VARIANTS VAL-212 AND PRO-447</scope>
    <source>
        <tissue>Fetal kidney</tissue>
        <tissue>Salivary gland</tissue>
        <tissue>Testis</tissue>
    </source>
</reference>
<reference key="3">
    <citation type="journal article" date="2005" name="Nature">
        <title>Generation and annotation of the DNA sequences of human chromosomes 2 and 4.</title>
        <authorList>
            <person name="Hillier L.W."/>
            <person name="Graves T.A."/>
            <person name="Fulton R.S."/>
            <person name="Fulton L.A."/>
            <person name="Pepin K.H."/>
            <person name="Minx P."/>
            <person name="Wagner-McPherson C."/>
            <person name="Layman D."/>
            <person name="Wylie K."/>
            <person name="Sekhon M."/>
            <person name="Becker M.C."/>
            <person name="Fewell G.A."/>
            <person name="Delehaunty K.D."/>
            <person name="Miner T.L."/>
            <person name="Nash W.E."/>
            <person name="Kremitzki C."/>
            <person name="Oddy L."/>
            <person name="Du H."/>
            <person name="Sun H."/>
            <person name="Bradshaw-Cordum H."/>
            <person name="Ali J."/>
            <person name="Carter J."/>
            <person name="Cordes M."/>
            <person name="Harris A."/>
            <person name="Isak A."/>
            <person name="van Brunt A."/>
            <person name="Nguyen C."/>
            <person name="Du F."/>
            <person name="Courtney L."/>
            <person name="Kalicki J."/>
            <person name="Ozersky P."/>
            <person name="Abbott S."/>
            <person name="Armstrong J."/>
            <person name="Belter E.A."/>
            <person name="Caruso L."/>
            <person name="Cedroni M."/>
            <person name="Cotton M."/>
            <person name="Davidson T."/>
            <person name="Desai A."/>
            <person name="Elliott G."/>
            <person name="Erb T."/>
            <person name="Fronick C."/>
            <person name="Gaige T."/>
            <person name="Haakenson W."/>
            <person name="Haglund K."/>
            <person name="Holmes A."/>
            <person name="Harkins R."/>
            <person name="Kim K."/>
            <person name="Kruchowski S.S."/>
            <person name="Strong C.M."/>
            <person name="Grewal N."/>
            <person name="Goyea E."/>
            <person name="Hou S."/>
            <person name="Levy A."/>
            <person name="Martinka S."/>
            <person name="Mead K."/>
            <person name="McLellan M.D."/>
            <person name="Meyer R."/>
            <person name="Randall-Maher J."/>
            <person name="Tomlinson C."/>
            <person name="Dauphin-Kohlberg S."/>
            <person name="Kozlowicz-Reilly A."/>
            <person name="Shah N."/>
            <person name="Swearengen-Shahid S."/>
            <person name="Snider J."/>
            <person name="Strong J.T."/>
            <person name="Thompson J."/>
            <person name="Yoakum M."/>
            <person name="Leonard S."/>
            <person name="Pearman C."/>
            <person name="Trani L."/>
            <person name="Radionenko M."/>
            <person name="Waligorski J.E."/>
            <person name="Wang C."/>
            <person name="Rock S.M."/>
            <person name="Tin-Wollam A.-M."/>
            <person name="Maupin R."/>
            <person name="Latreille P."/>
            <person name="Wendl M.C."/>
            <person name="Yang S.-P."/>
            <person name="Pohl C."/>
            <person name="Wallis J.W."/>
            <person name="Spieth J."/>
            <person name="Bieri T.A."/>
            <person name="Berkowicz N."/>
            <person name="Nelson J.O."/>
            <person name="Osborne J."/>
            <person name="Ding L."/>
            <person name="Meyer R."/>
            <person name="Sabo A."/>
            <person name="Shotland Y."/>
            <person name="Sinha P."/>
            <person name="Wohldmann P.E."/>
            <person name="Cook L.L."/>
            <person name="Hickenbotham M.T."/>
            <person name="Eldred J."/>
            <person name="Williams D."/>
            <person name="Jones T.A."/>
            <person name="She X."/>
            <person name="Ciccarelli F.D."/>
            <person name="Izaurralde E."/>
            <person name="Taylor J."/>
            <person name="Schmutz J."/>
            <person name="Myers R.M."/>
            <person name="Cox D.R."/>
            <person name="Huang X."/>
            <person name="McPherson J.D."/>
            <person name="Mardis E.R."/>
            <person name="Clifton S.W."/>
            <person name="Warren W.C."/>
            <person name="Chinwalla A.T."/>
            <person name="Eddy S.R."/>
            <person name="Marra M.A."/>
            <person name="Ovcharenko I."/>
            <person name="Furey T.S."/>
            <person name="Miller W."/>
            <person name="Eichler E.E."/>
            <person name="Bork P."/>
            <person name="Suyama M."/>
            <person name="Torrents D."/>
            <person name="Waterston R.H."/>
            <person name="Wilson R.K."/>
        </authorList>
    </citation>
    <scope>NUCLEOTIDE SEQUENCE [LARGE SCALE GENOMIC DNA]</scope>
</reference>
<reference key="4">
    <citation type="submission" date="2005-09" db="EMBL/GenBank/DDBJ databases">
        <authorList>
            <person name="Mural R.J."/>
            <person name="Istrail S."/>
            <person name="Sutton G.G."/>
            <person name="Florea L."/>
            <person name="Halpern A.L."/>
            <person name="Mobarry C.M."/>
            <person name="Lippert R."/>
            <person name="Walenz B."/>
            <person name="Shatkay H."/>
            <person name="Dew I."/>
            <person name="Miller J.R."/>
            <person name="Flanigan M.J."/>
            <person name="Edwards N.J."/>
            <person name="Bolanos R."/>
            <person name="Fasulo D."/>
            <person name="Halldorsson B.V."/>
            <person name="Hannenhalli S."/>
            <person name="Turner R."/>
            <person name="Yooseph S."/>
            <person name="Lu F."/>
            <person name="Nusskern D.R."/>
            <person name="Shue B.C."/>
            <person name="Zheng X.H."/>
            <person name="Zhong F."/>
            <person name="Delcher A.L."/>
            <person name="Huson D.H."/>
            <person name="Kravitz S.A."/>
            <person name="Mouchard L."/>
            <person name="Reinert K."/>
            <person name="Remington K.A."/>
            <person name="Clark A.G."/>
            <person name="Waterman M.S."/>
            <person name="Eichler E.E."/>
            <person name="Adams M.D."/>
            <person name="Hunkapiller M.W."/>
            <person name="Myers E.W."/>
            <person name="Venter J.C."/>
        </authorList>
    </citation>
    <scope>NUCLEOTIDE SEQUENCE [LARGE SCALE GENOMIC DNA]</scope>
    <scope>VARIANT VAL-212</scope>
</reference>
<reference key="5">
    <citation type="journal article" date="2006" name="Cell">
        <title>JHDM2A, a JmjC-containing H3K9 demethylase, facilitates transcription activation by androgen receptor.</title>
        <authorList>
            <person name="Yamane K."/>
            <person name="Toumazou C."/>
            <person name="Tsukada Y.I."/>
            <person name="Erdjument-Bromage H."/>
            <person name="Tempst P."/>
            <person name="Wong J."/>
            <person name="Zhang Y."/>
        </authorList>
    </citation>
    <scope>IDENTIFICATION BY MASS SPECTROMETRY</scope>
    <scope>FUNCTION</scope>
    <scope>CATALYTIC ACTIVITY</scope>
    <scope>COFACTOR</scope>
    <scope>DOMAIN</scope>
    <scope>MUTAGENESIS OF HIS-1120</scope>
</reference>
<reference key="6">
    <citation type="journal article" date="2008" name="Proc. Natl. Acad. Sci. U.S.A.">
        <title>A quantitative atlas of mitotic phosphorylation.</title>
        <authorList>
            <person name="Dephoure N."/>
            <person name="Zhou C."/>
            <person name="Villen J."/>
            <person name="Beausoleil S.A."/>
            <person name="Bakalarski C.E."/>
            <person name="Elledge S.J."/>
            <person name="Gygi S.P."/>
        </authorList>
    </citation>
    <scope>IDENTIFICATION BY MASS SPECTROMETRY [LARGE SCALE ANALYSIS]</scope>
    <source>
        <tissue>Cervix carcinoma</tissue>
    </source>
</reference>
<reference key="7">
    <citation type="journal article" date="2009" name="Science">
        <title>Lysine acetylation targets protein complexes and co-regulates major cellular functions.</title>
        <authorList>
            <person name="Choudhary C."/>
            <person name="Kumar C."/>
            <person name="Gnad F."/>
            <person name="Nielsen M.L."/>
            <person name="Rehman M."/>
            <person name="Walther T.C."/>
            <person name="Olsen J.V."/>
            <person name="Mann M."/>
        </authorList>
    </citation>
    <scope>ACETYLATION [LARGE SCALE ANALYSIS] AT LYS-895</scope>
    <scope>IDENTIFICATION BY MASS SPECTROMETRY [LARGE SCALE ANALYSIS]</scope>
</reference>
<reference key="8">
    <citation type="journal article" date="2010" name="Sci. Signal.">
        <title>Quantitative phosphoproteomics reveals widespread full phosphorylation site occupancy during mitosis.</title>
        <authorList>
            <person name="Olsen J.V."/>
            <person name="Vermeulen M."/>
            <person name="Santamaria A."/>
            <person name="Kumar C."/>
            <person name="Miller M.L."/>
            <person name="Jensen L.J."/>
            <person name="Gnad F."/>
            <person name="Cox J."/>
            <person name="Jensen T.S."/>
            <person name="Nigg E.A."/>
            <person name="Brunak S."/>
            <person name="Mann M."/>
        </authorList>
    </citation>
    <scope>PHOSPHORYLATION [LARGE SCALE ANALYSIS] AT SER-445</scope>
    <scope>IDENTIFICATION BY MASS SPECTROMETRY [LARGE SCALE ANALYSIS]</scope>
    <source>
        <tissue>Cervix carcinoma</tissue>
    </source>
</reference>
<reference key="9">
    <citation type="journal article" date="2011" name="Sci. Signal.">
        <title>System-wide temporal characterization of the proteome and phosphoproteome of human embryonic stem cell differentiation.</title>
        <authorList>
            <person name="Rigbolt K.T."/>
            <person name="Prokhorova T.A."/>
            <person name="Akimov V."/>
            <person name="Henningsen J."/>
            <person name="Johansen P.T."/>
            <person name="Kratchmarova I."/>
            <person name="Kassem M."/>
            <person name="Mann M."/>
            <person name="Olsen J.V."/>
            <person name="Blagoev B."/>
        </authorList>
    </citation>
    <scope>PHOSPHORYLATION [LARGE SCALE ANALYSIS] AT SER-264</scope>
    <scope>IDENTIFICATION BY MASS SPECTROMETRY [LARGE SCALE ANALYSIS]</scope>
</reference>
<reference key="10">
    <citation type="journal article" date="2013" name="J. Proteome Res.">
        <title>Toward a comprehensive characterization of a human cancer cell phosphoproteome.</title>
        <authorList>
            <person name="Zhou H."/>
            <person name="Di Palma S."/>
            <person name="Preisinger C."/>
            <person name="Peng M."/>
            <person name="Polat A.N."/>
            <person name="Heck A.J."/>
            <person name="Mohammed S."/>
        </authorList>
    </citation>
    <scope>PHOSPHORYLATION [LARGE SCALE ANALYSIS] AT SER-325; SER-445 AND SER-766</scope>
    <scope>IDENTIFICATION BY MASS SPECTROMETRY [LARGE SCALE ANALYSIS]</scope>
    <source>
        <tissue>Cervix carcinoma</tissue>
        <tissue>Erythroleukemia</tissue>
    </source>
</reference>
<reference key="11">
    <citation type="journal article" date="2017" name="Cell Chem. Biol.">
        <title>Potent and Selective KDM5 Inhibitor Stops Cellular Demethylation of H3K4me3 at Transcription Start Sites and Proliferation of MM1S Myeloma Cells.</title>
        <authorList>
            <person name="Tumber A."/>
            <person name="Nuzzi A."/>
            <person name="Hookway E.S."/>
            <person name="Hatch S.B."/>
            <person name="Velupillai S."/>
            <person name="Johansson C."/>
            <person name="Kawamura A."/>
            <person name="Savitsky P."/>
            <person name="Yapp C."/>
            <person name="Szykowska A."/>
            <person name="Wu N."/>
            <person name="Bountra C."/>
            <person name="Strain-Damerell C."/>
            <person name="Burgess-Brown N.A."/>
            <person name="Ruda G.F."/>
            <person name="Fedorov O."/>
            <person name="Munro S."/>
            <person name="England K.S."/>
            <person name="Nowak R.P."/>
            <person name="Schofield C.J."/>
            <person name="La Thangue N.B."/>
            <person name="Pawlyn C."/>
            <person name="Davies F."/>
            <person name="Morgan G."/>
            <person name="Athanasou N."/>
            <person name="Muller S."/>
            <person name="Oppermann U."/>
            <person name="Brennan P.E."/>
        </authorList>
    </citation>
    <scope>FUNCTION</scope>
    <scope>MUTAGENESIS OF HIS-1120</scope>
</reference>
<reference key="12">
    <citation type="journal article" date="2023" name="Epigenetics Chromatin">
        <title>The pattern of histone H3 epigenetic posttranslational modifications is regulated by the VRK1 chromatin kinase.</title>
        <authorList>
            <person name="Monte-Serrano E."/>
            <person name="Morejon-Garcia P."/>
            <person name="Campillo-Marcos I."/>
            <person name="Campos-Diaz A."/>
            <person name="Navarro-Carrasco E."/>
            <person name="Lazo P.A."/>
        </authorList>
    </citation>
    <scope>INTERACTION WITH VRK1</scope>
</reference>
<reference key="13">
    <citation type="journal article" date="2006" name="Science">
        <title>The consensus coding sequences of human breast and colorectal cancers.</title>
        <authorList>
            <person name="Sjoeblom T."/>
            <person name="Jones S."/>
            <person name="Wood L.D."/>
            <person name="Parsons D.W."/>
            <person name="Lin J."/>
            <person name="Barber T.D."/>
            <person name="Mandelker D."/>
            <person name="Leary R.J."/>
            <person name="Ptak J."/>
            <person name="Silliman N."/>
            <person name="Szabo S."/>
            <person name="Buckhaults P."/>
            <person name="Farrell C."/>
            <person name="Meeh P."/>
            <person name="Markowitz S.D."/>
            <person name="Willis J."/>
            <person name="Dawson D."/>
            <person name="Willson J.K.V."/>
            <person name="Gazdar A.F."/>
            <person name="Hartigan J."/>
            <person name="Wu L."/>
            <person name="Liu C."/>
            <person name="Parmigiani G."/>
            <person name="Park B.H."/>
            <person name="Bachman K.E."/>
            <person name="Papadopoulos N."/>
            <person name="Vogelstein B."/>
            <person name="Kinzler K.W."/>
            <person name="Velculescu V.E."/>
        </authorList>
    </citation>
    <scope>VARIANT [LARGE SCALE ANALYSIS] HIS-187</scope>
</reference>
<dbReference type="EC" id="1.14.11.65" evidence="5"/>
<dbReference type="EMBL" id="AB018285">
    <property type="protein sequence ID" value="BAA34462.2"/>
    <property type="status" value="ALT_INIT"/>
    <property type="molecule type" value="mRNA"/>
</dbReference>
<dbReference type="EMBL" id="AL832150">
    <property type="protein sequence ID" value="CAH18459.3"/>
    <property type="molecule type" value="Transcribed_RNA"/>
</dbReference>
<dbReference type="EMBL" id="BX640698">
    <property type="protein sequence ID" value="CAE45820.1"/>
    <property type="molecule type" value="mRNA"/>
</dbReference>
<dbReference type="EMBL" id="CR749581">
    <property type="protein sequence ID" value="CAH18373.1"/>
    <property type="molecule type" value="mRNA"/>
</dbReference>
<dbReference type="EMBL" id="AC068288">
    <property type="protein sequence ID" value="AAY24210.1"/>
    <property type="molecule type" value="Genomic_DNA"/>
</dbReference>
<dbReference type="EMBL" id="CH471053">
    <property type="protein sequence ID" value="EAW99453.1"/>
    <property type="molecule type" value="Genomic_DNA"/>
</dbReference>
<dbReference type="EMBL" id="CH471053">
    <property type="protein sequence ID" value="EAW99456.1"/>
    <property type="molecule type" value="Genomic_DNA"/>
</dbReference>
<dbReference type="CCDS" id="CCDS1990.1"/>
<dbReference type="RefSeq" id="NP_001140160.1">
    <property type="nucleotide sequence ID" value="NM_001146688.2"/>
</dbReference>
<dbReference type="RefSeq" id="NP_060903.2">
    <property type="nucleotide sequence ID" value="NM_018433.5"/>
</dbReference>
<dbReference type="RefSeq" id="XP_016859982.1">
    <property type="nucleotide sequence ID" value="XM_017004493.1"/>
</dbReference>
<dbReference type="RefSeq" id="XP_047301057.1">
    <property type="nucleotide sequence ID" value="XM_047445101.1"/>
</dbReference>
<dbReference type="RefSeq" id="XP_047301058.1">
    <property type="nucleotide sequence ID" value="XM_047445102.1"/>
</dbReference>
<dbReference type="RefSeq" id="XP_047301059.1">
    <property type="nucleotide sequence ID" value="XM_047445103.1"/>
</dbReference>
<dbReference type="RefSeq" id="XP_047301060.1">
    <property type="nucleotide sequence ID" value="XM_047445104.1"/>
</dbReference>
<dbReference type="RefSeq" id="XP_054198968.1">
    <property type="nucleotide sequence ID" value="XM_054342993.1"/>
</dbReference>
<dbReference type="RefSeq" id="XP_054198969.1">
    <property type="nucleotide sequence ID" value="XM_054342994.1"/>
</dbReference>
<dbReference type="RefSeq" id="XP_054198970.1">
    <property type="nucleotide sequence ID" value="XM_054342995.1"/>
</dbReference>
<dbReference type="RefSeq" id="XP_054198971.1">
    <property type="nucleotide sequence ID" value="XM_054342996.1"/>
</dbReference>
<dbReference type="SMR" id="Q9Y4C1"/>
<dbReference type="BioGRID" id="120927">
    <property type="interactions" value="69"/>
</dbReference>
<dbReference type="CORUM" id="Q9Y4C1"/>
<dbReference type="DIP" id="DIP-53661N"/>
<dbReference type="FunCoup" id="Q9Y4C1">
    <property type="interactions" value="2602"/>
</dbReference>
<dbReference type="IntAct" id="Q9Y4C1">
    <property type="interactions" value="21"/>
</dbReference>
<dbReference type="MINT" id="Q9Y4C1"/>
<dbReference type="STRING" id="9606.ENSP00000386660"/>
<dbReference type="BindingDB" id="Q9Y4C1"/>
<dbReference type="ChEMBL" id="CHEMBL1938209"/>
<dbReference type="GuidetoPHARMACOLOGY" id="2673"/>
<dbReference type="CarbonylDB" id="Q9Y4C1"/>
<dbReference type="GlyGen" id="Q9Y4C1">
    <property type="glycosylation" value="2 sites, 1 N-linked glycan (1 site), 1 O-linked glycan (1 site)"/>
</dbReference>
<dbReference type="iPTMnet" id="Q9Y4C1"/>
<dbReference type="PhosphoSitePlus" id="Q9Y4C1"/>
<dbReference type="SwissPalm" id="Q9Y4C1"/>
<dbReference type="BioMuta" id="KDM3A"/>
<dbReference type="DMDM" id="308153659"/>
<dbReference type="jPOST" id="Q9Y4C1"/>
<dbReference type="MassIVE" id="Q9Y4C1"/>
<dbReference type="PaxDb" id="9606-ENSP00000386660"/>
<dbReference type="PeptideAtlas" id="Q9Y4C1"/>
<dbReference type="ProteomicsDB" id="86157"/>
<dbReference type="Pumba" id="Q9Y4C1"/>
<dbReference type="Antibodypedia" id="32101">
    <property type="antibodies" value="434 antibodies from 35 providers"/>
</dbReference>
<dbReference type="DNASU" id="55818"/>
<dbReference type="Ensembl" id="ENST00000312912.10">
    <property type="protein sequence ID" value="ENSP00000323659.5"/>
    <property type="gene ID" value="ENSG00000115548.17"/>
</dbReference>
<dbReference type="Ensembl" id="ENST00000409064.5">
    <property type="protein sequence ID" value="ENSP00000386516.1"/>
    <property type="gene ID" value="ENSG00000115548.17"/>
</dbReference>
<dbReference type="Ensembl" id="ENST00000409556.5">
    <property type="protein sequence ID" value="ENSP00000386660.1"/>
    <property type="gene ID" value="ENSG00000115548.17"/>
</dbReference>
<dbReference type="GeneID" id="55818"/>
<dbReference type="KEGG" id="hsa:55818"/>
<dbReference type="MANE-Select" id="ENST00000312912.10">
    <property type="protein sequence ID" value="ENSP00000323659.5"/>
    <property type="RefSeq nucleotide sequence ID" value="NM_018433.6"/>
    <property type="RefSeq protein sequence ID" value="NP_060903.2"/>
</dbReference>
<dbReference type="UCSC" id="uc002sri.5">
    <property type="organism name" value="human"/>
</dbReference>
<dbReference type="AGR" id="HGNC:20815"/>
<dbReference type="CTD" id="55818"/>
<dbReference type="DisGeNET" id="55818"/>
<dbReference type="GeneCards" id="KDM3A"/>
<dbReference type="HGNC" id="HGNC:20815">
    <property type="gene designation" value="KDM3A"/>
</dbReference>
<dbReference type="HPA" id="ENSG00000115548">
    <property type="expression patterns" value="Low tissue specificity"/>
</dbReference>
<dbReference type="MalaCards" id="KDM3A"/>
<dbReference type="MIM" id="611512">
    <property type="type" value="gene"/>
</dbReference>
<dbReference type="neXtProt" id="NX_Q9Y4C1"/>
<dbReference type="OpenTargets" id="ENSG00000115548"/>
<dbReference type="PharmGKB" id="PA164721293"/>
<dbReference type="VEuPathDB" id="HostDB:ENSG00000115548"/>
<dbReference type="eggNOG" id="KOG1356">
    <property type="taxonomic scope" value="Eukaryota"/>
</dbReference>
<dbReference type="GeneTree" id="ENSGT00940000160135"/>
<dbReference type="HOGENOM" id="CLU_002991_0_0_1"/>
<dbReference type="InParanoid" id="Q9Y4C1"/>
<dbReference type="OMA" id="THDPPVK"/>
<dbReference type="OrthoDB" id="1667110at2759"/>
<dbReference type="PAN-GO" id="Q9Y4C1">
    <property type="GO annotations" value="7 GO annotations based on evolutionary models"/>
</dbReference>
<dbReference type="PhylomeDB" id="Q9Y4C1"/>
<dbReference type="TreeFam" id="TF324723"/>
<dbReference type="BioCyc" id="MetaCyc:ENSG00000115548-MONOMER"/>
<dbReference type="BRENDA" id="1.14.11.65">
    <property type="organism ID" value="2681"/>
</dbReference>
<dbReference type="PathwayCommons" id="Q9Y4C1"/>
<dbReference type="Reactome" id="R-HSA-3214842">
    <property type="pathway name" value="HDMs demethylate histones"/>
</dbReference>
<dbReference type="Reactome" id="R-HSA-9029569">
    <property type="pathway name" value="NR1H3 &amp; NR1H2 regulate gene expression linked to cholesterol transport and efflux"/>
</dbReference>
<dbReference type="SignaLink" id="Q9Y4C1"/>
<dbReference type="SIGNOR" id="Q9Y4C1"/>
<dbReference type="BioGRID-ORCS" id="55818">
    <property type="hits" value="11 hits in 1167 CRISPR screens"/>
</dbReference>
<dbReference type="CD-CODE" id="91857CE7">
    <property type="entry name" value="Nucleolus"/>
</dbReference>
<dbReference type="ChiTaRS" id="KDM3A">
    <property type="organism name" value="human"/>
</dbReference>
<dbReference type="GenomeRNAi" id="55818"/>
<dbReference type="Pharos" id="Q9Y4C1">
    <property type="development level" value="Tchem"/>
</dbReference>
<dbReference type="PRO" id="PR:Q9Y4C1"/>
<dbReference type="Proteomes" id="UP000005640">
    <property type="component" value="Chromosome 2"/>
</dbReference>
<dbReference type="RNAct" id="Q9Y4C1">
    <property type="molecule type" value="protein"/>
</dbReference>
<dbReference type="Bgee" id="ENSG00000115548">
    <property type="expression patterns" value="Expressed in secondary oocyte and 207 other cell types or tissues"/>
</dbReference>
<dbReference type="ExpressionAtlas" id="Q9Y4C1">
    <property type="expression patterns" value="baseline and differential"/>
</dbReference>
<dbReference type="GO" id="GO:0000785">
    <property type="term" value="C:chromatin"/>
    <property type="evidence" value="ECO:0000318"/>
    <property type="project" value="GO_Central"/>
</dbReference>
<dbReference type="GO" id="GO:0005737">
    <property type="term" value="C:cytoplasm"/>
    <property type="evidence" value="ECO:0007669"/>
    <property type="project" value="UniProtKB-SubCell"/>
</dbReference>
<dbReference type="GO" id="GO:0000118">
    <property type="term" value="C:histone deacetylase complex"/>
    <property type="evidence" value="ECO:0000318"/>
    <property type="project" value="GO_Central"/>
</dbReference>
<dbReference type="GO" id="GO:0001673">
    <property type="term" value="C:male germ cell nucleus"/>
    <property type="evidence" value="ECO:0007669"/>
    <property type="project" value="Ensembl"/>
</dbReference>
<dbReference type="GO" id="GO:0016020">
    <property type="term" value="C:membrane"/>
    <property type="evidence" value="ECO:0007005"/>
    <property type="project" value="UniProtKB"/>
</dbReference>
<dbReference type="GO" id="GO:0005654">
    <property type="term" value="C:nucleoplasm"/>
    <property type="evidence" value="ECO:0000314"/>
    <property type="project" value="HPA"/>
</dbReference>
<dbReference type="GO" id="GO:0005634">
    <property type="term" value="C:nucleus"/>
    <property type="evidence" value="ECO:0000314"/>
    <property type="project" value="UniProtKB"/>
</dbReference>
<dbReference type="GO" id="GO:0031490">
    <property type="term" value="F:chromatin DNA binding"/>
    <property type="evidence" value="ECO:0000318"/>
    <property type="project" value="GO_Central"/>
</dbReference>
<dbReference type="GO" id="GO:0032454">
    <property type="term" value="F:histone H3K9 demethylase activity"/>
    <property type="evidence" value="ECO:0000315"/>
    <property type="project" value="UniProtKB"/>
</dbReference>
<dbReference type="GO" id="GO:0140683">
    <property type="term" value="F:histone H3K9me/H3K9me2 demethylase activity"/>
    <property type="evidence" value="ECO:0000314"/>
    <property type="project" value="FlyBase"/>
</dbReference>
<dbReference type="GO" id="GO:0005506">
    <property type="term" value="F:iron ion binding"/>
    <property type="evidence" value="ECO:0000315"/>
    <property type="project" value="UniProtKB"/>
</dbReference>
<dbReference type="GO" id="GO:0050681">
    <property type="term" value="F:nuclear androgen receptor binding"/>
    <property type="evidence" value="ECO:0000314"/>
    <property type="project" value="UniProtKB"/>
</dbReference>
<dbReference type="GO" id="GO:0003712">
    <property type="term" value="F:transcription coregulator activity"/>
    <property type="evidence" value="ECO:0000318"/>
    <property type="project" value="GO_Central"/>
</dbReference>
<dbReference type="GO" id="GO:0008270">
    <property type="term" value="F:zinc ion binding"/>
    <property type="evidence" value="ECO:0007669"/>
    <property type="project" value="UniProtKB-KW"/>
</dbReference>
<dbReference type="GO" id="GO:0030521">
    <property type="term" value="P:androgen receptor signaling pathway"/>
    <property type="evidence" value="ECO:0000314"/>
    <property type="project" value="UniProtKB"/>
</dbReference>
<dbReference type="GO" id="GO:1990830">
    <property type="term" value="P:cellular response to leukemia inhibitory factor"/>
    <property type="evidence" value="ECO:0007669"/>
    <property type="project" value="Ensembl"/>
</dbReference>
<dbReference type="GO" id="GO:0046293">
    <property type="term" value="P:formaldehyde biosynthetic process"/>
    <property type="evidence" value="ECO:0000314"/>
    <property type="project" value="UniProtKB"/>
</dbReference>
<dbReference type="GO" id="GO:0009755">
    <property type="term" value="P:hormone-mediated signaling pathway"/>
    <property type="evidence" value="ECO:0000314"/>
    <property type="project" value="UniProtKB"/>
</dbReference>
<dbReference type="GO" id="GO:0120162">
    <property type="term" value="P:positive regulation of cold-induced thermogenesis"/>
    <property type="evidence" value="ECO:0000250"/>
    <property type="project" value="YuBioLab"/>
</dbReference>
<dbReference type="GO" id="GO:0045893">
    <property type="term" value="P:positive regulation of DNA-templated transcription"/>
    <property type="evidence" value="ECO:0000315"/>
    <property type="project" value="UniProtKB"/>
</dbReference>
<dbReference type="GO" id="GO:0045944">
    <property type="term" value="P:positive regulation of transcription by RNA polymerase II"/>
    <property type="evidence" value="ECO:0007669"/>
    <property type="project" value="Ensembl"/>
</dbReference>
<dbReference type="GO" id="GO:2000736">
    <property type="term" value="P:regulation of stem cell differentiation"/>
    <property type="evidence" value="ECO:0007669"/>
    <property type="project" value="Ensembl"/>
</dbReference>
<dbReference type="GO" id="GO:2000036">
    <property type="term" value="P:regulation of stem cell population maintenance"/>
    <property type="evidence" value="ECO:0007669"/>
    <property type="project" value="Ensembl"/>
</dbReference>
<dbReference type="GO" id="GO:0006357">
    <property type="term" value="P:regulation of transcription by RNA polymerase II"/>
    <property type="evidence" value="ECO:0000318"/>
    <property type="project" value="GO_Central"/>
</dbReference>
<dbReference type="GO" id="GO:0007290">
    <property type="term" value="P:spermatid nucleus elongation"/>
    <property type="evidence" value="ECO:0007669"/>
    <property type="project" value="Ensembl"/>
</dbReference>
<dbReference type="FunFam" id="2.60.120.650:FF:000004">
    <property type="entry name" value="Putative lysine-specific demethylase 3B"/>
    <property type="match status" value="1"/>
</dbReference>
<dbReference type="Gene3D" id="2.60.120.650">
    <property type="entry name" value="Cupin"/>
    <property type="match status" value="1"/>
</dbReference>
<dbReference type="InterPro" id="IPR054294">
    <property type="entry name" value="DUF7030"/>
</dbReference>
<dbReference type="InterPro" id="IPR045109">
    <property type="entry name" value="JHDM2-like"/>
</dbReference>
<dbReference type="InterPro" id="IPR003347">
    <property type="entry name" value="JmjC_dom"/>
</dbReference>
<dbReference type="InterPro" id="IPR054503">
    <property type="entry name" value="KDM3AB_Tudor"/>
</dbReference>
<dbReference type="InterPro" id="IPR054504">
    <property type="entry name" value="PWWP_KDM3B"/>
</dbReference>
<dbReference type="PANTHER" id="PTHR12549">
    <property type="entry name" value="JMJC DOMAIN-CONTAINING HISTONE DEMETHYLATION PROTEIN"/>
    <property type="match status" value="1"/>
</dbReference>
<dbReference type="PANTHER" id="PTHR12549:SF7">
    <property type="entry name" value="LYSINE-SPECIFIC DEMETHYLASE 3A"/>
    <property type="match status" value="1"/>
</dbReference>
<dbReference type="Pfam" id="PF22989">
    <property type="entry name" value="DUF7030"/>
    <property type="match status" value="1"/>
</dbReference>
<dbReference type="Pfam" id="PF02373">
    <property type="entry name" value="JmjC"/>
    <property type="match status" value="1"/>
</dbReference>
<dbReference type="Pfam" id="PF22988">
    <property type="entry name" value="PWWP_KDM3B"/>
    <property type="match status" value="1"/>
</dbReference>
<dbReference type="Pfam" id="PF22987">
    <property type="entry name" value="Tudor_KDM3B"/>
    <property type="match status" value="1"/>
</dbReference>
<dbReference type="SMART" id="SM00558">
    <property type="entry name" value="JmjC"/>
    <property type="match status" value="1"/>
</dbReference>
<dbReference type="SUPFAM" id="SSF51197">
    <property type="entry name" value="Clavaminate synthase-like"/>
    <property type="match status" value="1"/>
</dbReference>
<dbReference type="PROSITE" id="PS51184">
    <property type="entry name" value="JMJC"/>
    <property type="match status" value="1"/>
</dbReference>
<organism>
    <name type="scientific">Homo sapiens</name>
    <name type="common">Human</name>
    <dbReference type="NCBI Taxonomy" id="9606"/>
    <lineage>
        <taxon>Eukaryota</taxon>
        <taxon>Metazoa</taxon>
        <taxon>Chordata</taxon>
        <taxon>Craniata</taxon>
        <taxon>Vertebrata</taxon>
        <taxon>Euteleostomi</taxon>
        <taxon>Mammalia</taxon>
        <taxon>Eutheria</taxon>
        <taxon>Euarchontoglires</taxon>
        <taxon>Primates</taxon>
        <taxon>Haplorrhini</taxon>
        <taxon>Catarrhini</taxon>
        <taxon>Hominidae</taxon>
        <taxon>Homo</taxon>
    </lineage>
</organism>
<keyword id="KW-0007">Acetylation</keyword>
<keyword id="KW-0010">Activator</keyword>
<keyword id="KW-0156">Chromatin regulator</keyword>
<keyword id="KW-0963">Cytoplasm</keyword>
<keyword id="KW-0221">Differentiation</keyword>
<keyword id="KW-0223">Dioxygenase</keyword>
<keyword id="KW-0408">Iron</keyword>
<keyword id="KW-0479">Metal-binding</keyword>
<keyword id="KW-0539">Nucleus</keyword>
<keyword id="KW-0560">Oxidoreductase</keyword>
<keyword id="KW-0597">Phosphoprotein</keyword>
<keyword id="KW-1267">Proteomics identification</keyword>
<keyword id="KW-1185">Reference proteome</keyword>
<keyword id="KW-0744">Spermatogenesis</keyword>
<keyword id="KW-0804">Transcription</keyword>
<keyword id="KW-0805">Transcription regulation</keyword>
<keyword id="KW-0862">Zinc</keyword>
<keyword id="KW-0863">Zinc-finger</keyword>
<sequence length="1321" mass="147341">MVLTLGESWPVLVGRRFLSLSAADGSDGSHDSWDVERVAEWPWLSGTIRAVSHTDVTKKDLKVCVEFDGESWRKRRWIEVYSLLRRAFLVEHNLVLAERKSPEISERIVQWPAITYKPLLDKAGLGSITSVRFLGDQQRVFLSKDLLKPIQDVNSLRLSLTDNQIVSKEFQALIVKHLDESHLLKGDKNLVGSEVKIYSLDPSTQWFSATVINGNPASKTLQVNCEEIPALKIVDPSLIHVEVVHDNLVTCGNSARIGAVKRKSSENNGTLVSKQAKSCSEASPSMCPVQSVPTTVFKEILLGCTAATPPSKDPRQQSTPQAANSPPNLGAKIPQGCHKQSLPEEISSCLNTKSEALRTKPDVCKAGLLSKSSQIGTGDLKILTEPKGSCTQPKTNTDQENRLESVPQALTGLPKECLPTKASSKAELEIANPPELQKHLEHAPSPSDVSNAPEVKAGVNSDSPNNCSGKKVEPSALACRSQNLKESSVKVDNESCCSRSNNKIQNAPSRKSVLTDPAKLKKLQQSGEAFVQDDSCVNIVAQLPKCRECRLDSLRKDKEQQKDSPVFCRFFHFRRLQFNKHGVLRVEGFLTPNKYDNEAIGLWLPLTKNVVGIDLDTAKYILANIGDHFCQMVISEKEAMSTIEPHRQVAWKRAVKGVREMCDVCDTTIFNLHWVCPRCGFGVCVDCYRMKRKNCQQGAAYKTFSWLKCVKSQIHEPENLMPTQIIPGKALYDVGDIVHSVRAKWGIKANCPCSNRQFKLFSKPASKEDLKQTSLAGEKPTLGAVLQQNPSVLEPAAVGGEAASKPAGSMKPACPASTSPLNWLADLTSGNVNKENKEKQPTMPILKNEIKCLPPLPPLSKSSTVLHTFNSTILTPVSNNNSGFLRNLLNSSTGKTENGLKNTPKILDDIFASLVQNKTTSDLSKRPQGLTIKPSILGFDTPHYWLCDNRLLCLQDPNNKSNWNVFRECWKQGQPVMVSGVHHKLNSELWKPESFRKEFGEQEVDLVNCRTNEIITGATVGDFWDGFEDVPNRLKNEKEPMVLKLKDWPPGEDFRDMMPSRFDDLMANIPLPEYTRRDGKLNLASRLPNYFVRPDLGPKMYNAYGLITPEDRKYGTTNLHLDVSDAANVMVYVGIPKGQCEQEEEVLKTIQDGDSDELTIKRFIEGKEKPGALWHIYAAKDTEKIREFLKKVSEEQGQENPADHDPIHDQSWYLDRSLRKRLHQEYGVQGWAIVQFLGDVVFIPAGAPHQVHNLYSCIKVAEDFVSPEHVKHCFWLTQEFRYLSQTHTNHEDKLQVKNVIYHAVKDAVAMLKASESSFGKP</sequence>